<name>M3H32_BOMMX</name>
<protein>
    <recommendedName>
        <fullName>Maximins 3/H3 type 2</fullName>
    </recommendedName>
    <component>
        <recommendedName>
            <fullName>Maximin-3</fullName>
        </recommendedName>
    </component>
    <component>
        <recommendedName>
            <fullName>Maximin-H3</fullName>
        </recommendedName>
    </component>
</protein>
<organism>
    <name type="scientific">Bombina maxima</name>
    <name type="common">Giant fire-bellied toad</name>
    <name type="synonym">Chinese red belly toad</name>
    <dbReference type="NCBI Taxonomy" id="161274"/>
    <lineage>
        <taxon>Eukaryota</taxon>
        <taxon>Metazoa</taxon>
        <taxon>Chordata</taxon>
        <taxon>Craniata</taxon>
        <taxon>Vertebrata</taxon>
        <taxon>Euteleostomi</taxon>
        <taxon>Amphibia</taxon>
        <taxon>Batrachia</taxon>
        <taxon>Anura</taxon>
        <taxon>Bombinatoridae</taxon>
        <taxon>Bombina</taxon>
    </lineage>
</organism>
<sequence>MNFKYIVAVSFLIASAYARSVQNDEQSLSQRDVLEEEESLREIRGIGGKILSGLKTALKGAAKELASTYLHRKRTAEEHEVMKRLEAVMRDLDSLDYPEEAAERETRGFNQDEIANLFTKKEKRILGPVLGLVGNALGGLIKKIG</sequence>
<accession>Q58T70</accession>
<reference key="1">
    <citation type="journal article" date="2005" name="Eur. J. Immunol.">
        <title>Variety of antimicrobial peptides in the Bombina maxima toad and evidence of their rapid diversification.</title>
        <authorList>
            <person name="Lee W.-H."/>
            <person name="Li Y."/>
            <person name="Lai R."/>
            <person name="Li S."/>
            <person name="Zhang Y."/>
            <person name="Wang W."/>
        </authorList>
    </citation>
    <scope>NUCLEOTIDE SEQUENCE [MRNA]</scope>
    <scope>AMIDATION AT ILE-144</scope>
    <source>
        <tissue>Skin</tissue>
    </source>
</reference>
<reference key="2">
    <citation type="journal article" date="2002" name="Peptides">
        <title>Antimicrobial peptides from skin secretions of Chinese red belly toad Bombina maxima.</title>
        <authorList>
            <person name="Lai R."/>
            <person name="Zheng Y.-T."/>
            <person name="Shen J.-H."/>
            <person name="Liu G.-J."/>
            <person name="Liu H."/>
            <person name="Lee W.-H."/>
            <person name="Tang S.-Z."/>
            <person name="Zhang Y."/>
        </authorList>
    </citation>
    <scope>PROTEIN SEQUENCE OF 45-71 AND 125-144</scope>
    <scope>AMIDATION AT ILE-144</scope>
    <scope>MASS SPECTROMETRY</scope>
    <scope>FUNCTION OF MAXIMIN-3 AND MAXIMIN-H3</scope>
</reference>
<dbReference type="EMBL" id="AY848990">
    <property type="protein sequence ID" value="AAX50211.1"/>
    <property type="molecule type" value="mRNA"/>
</dbReference>
<dbReference type="SMR" id="Q58T70"/>
<dbReference type="GO" id="GO:0005576">
    <property type="term" value="C:extracellular region"/>
    <property type="evidence" value="ECO:0007669"/>
    <property type="project" value="UniProtKB-SubCell"/>
</dbReference>
<dbReference type="GO" id="GO:0042742">
    <property type="term" value="P:defense response to bacterium"/>
    <property type="evidence" value="ECO:0007669"/>
    <property type="project" value="UniProtKB-KW"/>
</dbReference>
<dbReference type="GO" id="GO:0050832">
    <property type="term" value="P:defense response to fungus"/>
    <property type="evidence" value="ECO:0007669"/>
    <property type="project" value="UniProtKB-KW"/>
</dbReference>
<dbReference type="GO" id="GO:0031640">
    <property type="term" value="P:killing of cells of another organism"/>
    <property type="evidence" value="ECO:0007669"/>
    <property type="project" value="UniProtKB-KW"/>
</dbReference>
<dbReference type="InterPro" id="IPR007962">
    <property type="entry name" value="Bombinin"/>
</dbReference>
<dbReference type="Pfam" id="PF05298">
    <property type="entry name" value="Bombinin"/>
    <property type="match status" value="1"/>
</dbReference>
<feature type="signal peptide" evidence="2">
    <location>
        <begin position="1"/>
        <end position="18"/>
    </location>
</feature>
<feature type="propeptide" id="PRO_0000003124" evidence="1">
    <location>
        <begin position="19"/>
        <end position="43"/>
    </location>
</feature>
<feature type="peptide" id="PRO_0000003125" description="Maximin-3">
    <location>
        <begin position="45"/>
        <end position="71"/>
    </location>
</feature>
<feature type="propeptide" id="PRO_0000003126" evidence="3">
    <location>
        <begin position="74"/>
        <end position="124"/>
    </location>
</feature>
<feature type="peptide" id="PRO_0000003127" description="Maximin-H3">
    <location>
        <begin position="125"/>
        <end position="144"/>
    </location>
</feature>
<feature type="modified residue" description="Isoleucine amide" evidence="3 4">
    <location>
        <position position="144"/>
    </location>
</feature>
<comment type="function">
    <text evidence="3">Maximin-3 shows antibacterial activity against both Gram-positive and Gram-negative bacteria. It also shows antimicrobial activity against the fungus C.albicans, but not against A.flavus nor P.uticale. It has little hemolytic activity. It possess a significant cytotoxicity against tumor cell lines. It possess a significant anti-HIV activity. It shows high spermicidal activity.</text>
</comment>
<comment type="function">
    <text evidence="3">Maximin-H3 shows antibacterial activity against both Gram-positive and Gram-negative bacteria. It also shows antimicrobial activity against the fungus C.albicans. Shows strong hemolytic activity.</text>
</comment>
<comment type="subcellular location">
    <subcellularLocation>
        <location>Secreted</location>
    </subcellularLocation>
</comment>
<comment type="tissue specificity">
    <text>Expressed by the skin glands.</text>
</comment>
<comment type="mass spectrometry">
    <molecule>Maximin-3</molecule>
</comment>
<comment type="mass spectrometry">
    <molecule>Maximin-H3</molecule>
</comment>
<comment type="similarity">
    <text evidence="5">Belongs to the bombinin family.</text>
</comment>
<proteinExistence type="evidence at protein level"/>
<evidence type="ECO:0000250" key="1"/>
<evidence type="ECO:0000255" key="2"/>
<evidence type="ECO:0000269" key="3">
    <source>
    </source>
</evidence>
<evidence type="ECO:0000269" key="4">
    <source>
    </source>
</evidence>
<evidence type="ECO:0000305" key="5"/>
<keyword id="KW-0027">Amidation</keyword>
<keyword id="KW-0878">Amphibian defense peptide</keyword>
<keyword id="KW-0044">Antibiotic</keyword>
<keyword id="KW-0929">Antimicrobial</keyword>
<keyword id="KW-0165">Cleavage on pair of basic residues</keyword>
<keyword id="KW-0204">Cytolysis</keyword>
<keyword id="KW-0903">Direct protein sequencing</keyword>
<keyword id="KW-0295">Fungicide</keyword>
<keyword id="KW-0354">Hemolysis</keyword>
<keyword id="KW-0964">Secreted</keyword>
<keyword id="KW-0732">Signal</keyword>